<feature type="signal peptide" evidence="1">
    <location>
        <begin position="1"/>
        <end position="19"/>
    </location>
</feature>
<feature type="chain" id="PRO_0000016358" description="Integrin beta pat-3">
    <location>
        <begin position="20"/>
        <end position="809"/>
    </location>
</feature>
<feature type="topological domain" description="Extracellular" evidence="1">
    <location>
        <begin position="20"/>
        <end position="737"/>
    </location>
</feature>
<feature type="transmembrane region" description="Helical" evidence="1">
    <location>
        <begin position="738"/>
        <end position="758"/>
    </location>
</feature>
<feature type="topological domain" description="Cytoplasmic" evidence="1">
    <location>
        <begin position="759"/>
        <end position="809"/>
    </location>
</feature>
<feature type="domain" description="VWFA">
    <location>
        <begin position="153"/>
        <end position="352"/>
    </location>
</feature>
<feature type="domain" description="I-EGF 1" evidence="2">
    <location>
        <begin position="476"/>
        <end position="511"/>
    </location>
</feature>
<feature type="domain" description="I-EGF 2" evidence="2">
    <location>
        <begin position="512"/>
        <end position="564"/>
    </location>
</feature>
<feature type="domain" description="I-EGF 3" evidence="2">
    <location>
        <begin position="565"/>
        <end position="601"/>
    </location>
</feature>
<feature type="domain" description="I-EGF 4" evidence="2">
    <location>
        <begin position="602"/>
        <end position="645"/>
    </location>
</feature>
<feature type="modified residue" description="Phosphotyrosine" evidence="13">
    <location>
        <position position="792"/>
    </location>
</feature>
<feature type="glycosylation site" description="N-linked (GlcNAc...) asparagine" evidence="1">
    <location>
        <position position="47"/>
    </location>
</feature>
<feature type="glycosylation site" description="N-linked (GlcNAc...) asparagine" evidence="4 6">
    <location>
        <position position="141"/>
    </location>
</feature>
<feature type="glycosylation site" description="N-linked (GlcNAc...) asparagine" evidence="4 6">
    <location>
        <position position="269"/>
    </location>
</feature>
<feature type="glycosylation site" description="N-linked (GlcNAc...) asparagine" evidence="1">
    <location>
        <position position="373"/>
    </location>
</feature>
<feature type="glycosylation site" description="N-linked (GlcNAc...) asparagine" evidence="3 6">
    <location>
        <position position="400"/>
    </location>
</feature>
<feature type="glycosylation site" description="N-linked (GlcNAc...) asparagine" evidence="6">
    <location>
        <position position="530"/>
    </location>
</feature>
<feature type="glycosylation site" description="N-linked (GlcNAc...) asparagine" evidence="6">
    <location>
        <position position="672"/>
    </location>
</feature>
<feature type="glycosylation site" description="N-linked (GlcNAc...) asparagine" evidence="1">
    <location>
        <position position="693"/>
    </location>
</feature>
<feature type="glycosylation site" description="N-linked (GlcNAc...) asparagine" evidence="1">
    <location>
        <position position="721"/>
    </location>
</feature>
<feature type="disulfide bond" evidence="2">
    <location>
        <begin position="476"/>
        <end position="496"/>
    </location>
</feature>
<feature type="disulfide bond" evidence="2">
    <location>
        <begin position="489"/>
        <end position="499"/>
    </location>
</feature>
<feature type="disulfide bond" evidence="2">
    <location>
        <begin position="501"/>
        <end position="510"/>
    </location>
</feature>
<feature type="disulfide bond" evidence="2">
    <location>
        <begin position="512"/>
        <end position="543"/>
    </location>
</feature>
<feature type="disulfide bond" evidence="2">
    <location>
        <begin position="526"/>
        <end position="541"/>
    </location>
</feature>
<feature type="disulfide bond" evidence="2">
    <location>
        <begin position="535"/>
        <end position="546"/>
    </location>
</feature>
<feature type="disulfide bond" evidence="2">
    <location>
        <begin position="548"/>
        <end position="563"/>
    </location>
</feature>
<feature type="disulfide bond" evidence="2">
    <location>
        <begin position="565"/>
        <end position="586"/>
    </location>
</feature>
<feature type="disulfide bond" evidence="2">
    <location>
        <begin position="570"/>
        <end position="584"/>
    </location>
</feature>
<feature type="disulfide bond" evidence="2">
    <location>
        <begin position="578"/>
        <end position="589"/>
    </location>
</feature>
<feature type="disulfide bond" evidence="2">
    <location>
        <begin position="591"/>
        <end position="600"/>
    </location>
</feature>
<feature type="disulfide bond" evidence="2">
    <location>
        <begin position="602"/>
        <end position="625"/>
    </location>
</feature>
<feature type="disulfide bond" evidence="2">
    <location>
        <begin position="609"/>
        <end position="623"/>
    </location>
</feature>
<feature type="disulfide bond" evidence="2">
    <location>
        <begin position="617"/>
        <end position="628"/>
    </location>
</feature>
<feature type="disulfide bond" evidence="2">
    <location>
        <begin position="630"/>
        <end position="644"/>
    </location>
</feature>
<feature type="mutagenesis site" description="In ok804163; Impairs axon regeneration after injury." evidence="14">
    <original>P</original>
    <variation>L</variation>
    <location>
        <position position="790"/>
    </location>
</feature>
<feature type="mutagenesis site" description="In zh105; abolishes phosphorylation and enhances recruitment of tln-1 to the plasma membrane. Reduces the vulval lumen diameter and partially suppresses the Apf phenotype caused by hyperactive let-23 signaling in the double dep-1/lip-1 loss of function mutant. Increases vulval induction in the dep-1/lin-7 loss of function mutant." evidence="13">
    <original>Y</original>
    <variation>F</variation>
    <location>
        <position position="792"/>
    </location>
</feature>
<feature type="mutagenesis site" description="Abolishes association with the phosphatase dep-1." evidence="13">
    <original>TTT</original>
    <variation>AAA</variation>
    <location>
        <begin position="796"/>
        <end position="798"/>
    </location>
</feature>
<evidence type="ECO:0000255" key="1"/>
<evidence type="ECO:0000255" key="2">
    <source>
        <dbReference type="PROSITE-ProRule" id="PRU01392"/>
    </source>
</evidence>
<evidence type="ECO:0000269" key="3">
    <source>
    </source>
</evidence>
<evidence type="ECO:0000269" key="4">
    <source>
    </source>
</evidence>
<evidence type="ECO:0000269" key="5">
    <source>
    </source>
</evidence>
<evidence type="ECO:0000269" key="6">
    <source>
    </source>
</evidence>
<evidence type="ECO:0000269" key="7">
    <source>
    </source>
</evidence>
<evidence type="ECO:0000269" key="8">
    <source>
    </source>
</evidence>
<evidence type="ECO:0000269" key="9">
    <source>
    </source>
</evidence>
<evidence type="ECO:0000269" key="10">
    <source>
    </source>
</evidence>
<evidence type="ECO:0000269" key="11">
    <source>
    </source>
</evidence>
<evidence type="ECO:0000269" key="12">
    <source>
    </source>
</evidence>
<evidence type="ECO:0000269" key="13">
    <source>
    </source>
</evidence>
<evidence type="ECO:0000269" key="14">
    <source>
    </source>
</evidence>
<evidence type="ECO:0000269" key="15">
    <source>
    </source>
</evidence>
<evidence type="ECO:0000269" key="16">
    <source>
    </source>
</evidence>
<evidence type="ECO:0000305" key="17"/>
<evidence type="ECO:0000305" key="18">
    <source>
    </source>
</evidence>
<evidence type="ECO:0000312" key="19">
    <source>
        <dbReference type="WormBase" id="ZK1058.2"/>
    </source>
</evidence>
<keyword id="KW-0130">Cell adhesion</keyword>
<keyword id="KW-0965">Cell junction</keyword>
<keyword id="KW-1003">Cell membrane</keyword>
<keyword id="KW-0963">Cytoplasm</keyword>
<keyword id="KW-1015">Disulfide bond</keyword>
<keyword id="KW-0245">EGF-like domain</keyword>
<keyword id="KW-0325">Glycoprotein</keyword>
<keyword id="KW-0401">Integrin</keyword>
<keyword id="KW-0472">Membrane</keyword>
<keyword id="KW-0597">Phosphoprotein</keyword>
<keyword id="KW-0675">Receptor</keyword>
<keyword id="KW-1185">Reference proteome</keyword>
<keyword id="KW-0677">Repeat</keyword>
<keyword id="KW-0732">Signal</keyword>
<keyword id="KW-0812">Transmembrane</keyword>
<keyword id="KW-1133">Transmembrane helix</keyword>
<gene>
    <name evidence="19" type="primary">pat-3</name>
    <name evidence="19" type="ORF">ZK1058.2</name>
</gene>
<protein>
    <recommendedName>
        <fullName>Integrin beta pat-3</fullName>
    </recommendedName>
    <alternativeName>
        <fullName>Paralyzed arrest at two-fold protein 3</fullName>
    </alternativeName>
</protein>
<accession>Q27874</accession>
<name>PAT3_CAEEL</name>
<sequence length="809" mass="90138">MPPSTSLLLLAALLPFALPASDWKTGEVTGKVVEKSEFPCYSLSRDNYTCSACIQYHESCAWCGAPMFDEKKPYARCDSRAKLMEHGCPNSYIEDPATKLDITEDSKLSDQGQVESEEEAVQIKPQEMYVEIRPKSRVRFNVTYRQAVDYPVDLYYLMDLSYSMKDDKQKLSELGDLLAERMRTVTKNFRLGFGSFIDKKLMPFIDPRIEKQLSPCPTPCAEPYGFKHQMSLTTNTAKFKAEVDKAEISGNLDAPEGGFDAVVQALACNKTIGWRERARKMIVFSTDAGFHFAGDGRLAGVVEPNDGTCHLDREGYYTETLNQDYPSIALLHQMIKDRKANVIFAVTKNNQDLYTQLSNALPDVSSSVGVLANDSRNIVDLIEKEYLKISEKIIMVDNANASEGLKLTYRSMCLDGTTLKDTNVCEGIRVGDEVQFEVTLENTHCIDKRDFVLRIGPSGLDETLIVNVKVLCDCDCERQDRIVTNSADCNGGDMVCGVCRCKGGNVGKYCECNRPGMSTAALNEKCKRTNESAICEGRGVCNCGRCECNPRANPEEQISGEFCECDNFNCPRHDRKICAEHGECNCGKCICAPGWTGRACECPISTDSCLSANGKICNGKGECICGRCRCFDSPDGNRYSGAKCEICPTCPTKCVEYKNCVMCQQWQTGPLNETACDQCEFKVIPVEELPNLNETTPCQFVDPADDCTFYYLYYYDEATDNATVWVRKHKDCPPPVPVLAIVLGVIAGIVILGILLLLLWKLLTVLHDRSEYATFNNERLMAKWDTNENPIYKQATTTFKNPVYAGKAN</sequence>
<reference key="1">
    <citation type="journal article" date="1995" name="J. Cell Biol.">
        <title>Characterization of beta pat-3 heterodimers, a family of essential integrin receptors in C. elegans.</title>
        <authorList>
            <person name="Gettner S.N."/>
            <person name="Kenyon C."/>
            <person name="Reichardt L.F."/>
        </authorList>
    </citation>
    <scope>NUCLEOTIDE SEQUENCE [GENOMIC DNA]</scope>
    <source>
        <strain>Bristol N2</strain>
    </source>
</reference>
<reference key="2">
    <citation type="journal article" date="1998" name="Science">
        <title>Genome sequence of the nematode C. elegans: a platform for investigating biology.</title>
        <authorList>
            <consortium name="The C. elegans sequencing consortium"/>
        </authorList>
    </citation>
    <scope>NUCLEOTIDE SEQUENCE [LARGE SCALE GENOMIC DNA]</scope>
    <source>
        <strain>Bristol N2</strain>
    </source>
</reference>
<reference key="3">
    <citation type="journal article" date="1997" name="Neuron">
        <title>Neuronal migrations and axon fasciculation are disrupted in ina-1 integrin mutants.</title>
        <authorList>
            <person name="Baum P.D."/>
            <person name="Garriga G."/>
        </authorList>
    </citation>
    <scope>INTERACTION WITH INA-1</scope>
    <scope>SUBCELLULAR LOCATION</scope>
    <scope>DEVELOPMENTAL STAGE</scope>
</reference>
<reference key="4">
    <citation type="journal article" date="2003" name="Nat. Biotechnol.">
        <title>Lectin affinity capture, isotope-coded tagging and mass spectrometry to identify N-linked glycoproteins.</title>
        <authorList>
            <person name="Kaji H."/>
            <person name="Saito H."/>
            <person name="Yamauchi Y."/>
            <person name="Shinkawa T."/>
            <person name="Taoka M."/>
            <person name="Hirabayashi J."/>
            <person name="Kasai K."/>
            <person name="Takahashi N."/>
            <person name="Isobe T."/>
        </authorList>
    </citation>
    <scope>GLYCOSYLATION [LARGE SCALE ANALYSIS] AT ASN-400</scope>
    <scope>IDENTIFICATION BY MASS SPECTROMETRY</scope>
    <source>
        <strain>Bristol N2</strain>
    </source>
</reference>
<reference key="5">
    <citation type="journal article" date="2005" name="Glycobiology">
        <title>Identification of the hydrophobic glycoproteins of Caenorhabditis elegans.</title>
        <authorList>
            <person name="Fan X."/>
            <person name="She Y.-M."/>
            <person name="Bagshaw R.D."/>
            <person name="Callahan J.W."/>
            <person name="Schachter H."/>
            <person name="Mahuran D.J."/>
        </authorList>
    </citation>
    <scope>GLYCOSYLATION [LARGE SCALE ANALYSIS] AT ASN-141 AND ASN-269</scope>
    <scope>IDENTIFICATION BY MASS SPECTROMETRY</scope>
</reference>
<reference key="6">
    <citation type="journal article" date="2007" name="Dev. Dyn.">
        <title>Structural components of the nonstriated contractile apparatuses in the Caenorhabditis elegans gonadal myoepithelial sheath and their essential roles for ovulation.</title>
        <authorList>
            <person name="Ono K."/>
            <person name="Yu R."/>
            <person name="Ono S."/>
        </authorList>
    </citation>
    <scope>FUNCTION</scope>
    <scope>SUBCELLULAR LOCATION</scope>
    <scope>TISSUE SPECIFICITY</scope>
    <scope>DISRUPTION PHENOTYPE</scope>
</reference>
<reference key="7">
    <citation type="journal article" date="2007" name="Mol. Cell. Proteomics">
        <title>Proteomics reveals N-linked glycoprotein diversity in Caenorhabditis elegans and suggests an atypical translocation mechanism for integral membrane proteins.</title>
        <authorList>
            <person name="Kaji H."/>
            <person name="Kamiie J."/>
            <person name="Kawakami H."/>
            <person name="Kido K."/>
            <person name="Yamauchi Y."/>
            <person name="Shinkawa T."/>
            <person name="Taoka M."/>
            <person name="Takahashi N."/>
            <person name="Isobe T."/>
        </authorList>
    </citation>
    <scope>GLYCOSYLATION [LARGE SCALE ANALYSIS] AT ASN-141; ASN-269; ASN-400; ASN-530 AND ASN-672</scope>
    <scope>IDENTIFICATION BY MASS SPECTROMETRY</scope>
    <source>
        <strain>Bristol N2</strain>
    </source>
</reference>
<reference key="8">
    <citation type="journal article" date="2008" name="PLoS Genet.">
        <title>A RAC/CDC-42-independent GIT/PIX/PAK signaling pathway mediates cell migration in C. elegans.</title>
        <authorList>
            <person name="Lucanic M."/>
            <person name="Cheng H.J."/>
        </authorList>
    </citation>
    <scope>FUNCTION</scope>
    <scope>DISRUPTION PHENOTYPE</scope>
</reference>
<reference key="9">
    <citation type="journal article" date="2010" name="Biochem. Biophys. Res. Commun.">
        <title>Molting-specific downregulation of C. elegans body-wall muscle attachment sites: the role of RNF-5 E3 ligase.</title>
        <authorList>
            <person name="Zaidel-Bar R."/>
            <person name="Miller S."/>
            <person name="Kaminsky R."/>
            <person name="Broday L."/>
        </authorList>
    </citation>
    <scope>SUBCELLULAR LOCATION</scope>
    <scope>TISSUE SPECIFICITY</scope>
    <scope>DEVELOPMENTAL STAGE</scope>
</reference>
<reference key="10">
    <citation type="journal article" date="2010" name="Curr. Biol.">
        <title>Engulfment of apoptotic cells in C. elegans is mediated by integrin alpha/SRC signaling.</title>
        <authorList>
            <person name="Hsu T.Y."/>
            <person name="Wu Y.C."/>
        </authorList>
    </citation>
    <scope>FUNCTION</scope>
    <scope>DISRUPTION PHENOTYPE</scope>
</reference>
<reference key="11">
    <citation type="journal article" date="2012" name="PLoS Genet.">
        <title>Calpains mediate integrin attachment complex maintenance of adult muscle in Caenorhabditis elegans.</title>
        <authorList>
            <person name="Etheridge T."/>
            <person name="Oczypok E.A."/>
            <person name="Lehmann S."/>
            <person name="Fields B.D."/>
            <person name="Shephard F."/>
            <person name="Jacobson L.A."/>
            <person name="Szewczyk N.J."/>
        </authorList>
    </citation>
    <scope>FUNCTION</scope>
    <scope>COMPONENT OF AN INTEGRIN CONTAINING ATTACHMENT COMPLEX</scope>
    <scope>DISRUPTION PHENOTYPE</scope>
</reference>
<reference key="12">
    <citation type="journal article" date="2012" name="PLoS Genet.">
        <title>The atypical calpains: evolutionary analyses and roles in Caenorhabditis elegans cellular degeneration.</title>
        <authorList>
            <person name="Joyce P.I."/>
            <person name="Satija R."/>
            <person name="Chen M."/>
            <person name="Kuwabara P.E."/>
        </authorList>
    </citation>
    <scope>SUBCELLULAR LOCATION</scope>
</reference>
<reference key="13">
    <citation type="journal article" date="2013" name="Mol. Biol. Cell">
        <title>CPNA-1, a copine domain protein, is located at integrin adhesion sites and is required for myofilament stability in Caenorhabditis elegans.</title>
        <authorList>
            <person name="Warner A."/>
            <person name="Xiong G."/>
            <person name="Qadota H."/>
            <person name="Rogalski T."/>
            <person name="Vogl A.W."/>
            <person name="Moerman D.G."/>
            <person name="Benian G.M."/>
        </authorList>
    </citation>
    <scope>FUNCTION</scope>
    <scope>SUBCELLULAR LOCATION</scope>
    <scope>TISSUE SPECIFICITY</scope>
    <scope>DEVELOPMENTAL STAGE</scope>
</reference>
<reference key="14">
    <citation type="journal article" date="2017" name="PLoS Genet.">
        <title>beta-Integrin de-phosphorylation by the density-enhanced phosphatase DEP-1 attenuates EGFR signaling in C. elegans.</title>
        <authorList>
            <person name="Walser M."/>
            <person name="Umbricht C.A."/>
            <person name="Froehli E."/>
            <person name="Nanni P."/>
            <person name="Hajnal A."/>
        </authorList>
    </citation>
    <scope>FUNCTION</scope>
    <scope>IDENTIFICATION BY MASS SPECTROMETRY</scope>
    <scope>SUBCELLULAR LOCATION</scope>
    <scope>TISSUE SPECIFICITY</scope>
    <scope>DEVELOPMENTAL STAGE</scope>
    <scope>PHOSPHORYLATION AT TYR-792</scope>
    <scope>DISRUPTION PHENOTYPE</scope>
    <scope>MUTAGENESIS OF TYR-792 AND 796-THR--THR-798</scope>
</reference>
<reference key="15">
    <citation type="journal article" date="2019" name="J. Neurosci.">
        <title>C. elegans Tensin Promotes Axon Regeneration by Linking the Met-like SVH-2 and Integrin Signaling Pathways.</title>
        <authorList>
            <person name="Hisamoto N."/>
            <person name="Shimizu T."/>
            <person name="Asai K."/>
            <person name="Sakai Y."/>
            <person name="Pastuhov S.I."/>
            <person name="Hanafusa H."/>
            <person name="Matsumoto K."/>
        </authorList>
    </citation>
    <scope>FUNCTION</scope>
    <scope>INTERACTION WITH TNS-1</scope>
    <scope>MUTAGENESIS OF PRO-790</scope>
</reference>
<reference key="16">
    <citation type="journal article" date="2020" name="Elife">
        <title>The CHORD protein CHP-1 regulates EGF receptor trafficking and signaling in C. elegans and in human cells.</title>
        <authorList>
            <person name="Haag A."/>
            <person name="Walser M."/>
            <person name="Henggeler A."/>
            <person name="Hajnal A."/>
        </authorList>
    </citation>
    <scope>SUBCELLULAR LOCATION</scope>
</reference>
<proteinExistence type="evidence at protein level"/>
<organism>
    <name type="scientific">Caenorhabditis elegans</name>
    <dbReference type="NCBI Taxonomy" id="6239"/>
    <lineage>
        <taxon>Eukaryota</taxon>
        <taxon>Metazoa</taxon>
        <taxon>Ecdysozoa</taxon>
        <taxon>Nematoda</taxon>
        <taxon>Chromadorea</taxon>
        <taxon>Rhabditida</taxon>
        <taxon>Rhabditina</taxon>
        <taxon>Rhabditomorpha</taxon>
        <taxon>Rhabditoidea</taxon>
        <taxon>Rhabditidae</taxon>
        <taxon>Peloderinae</taxon>
        <taxon>Caenorhabditis</taxon>
    </lineage>
</organism>
<dbReference type="EMBL" id="U19744">
    <property type="protein sequence ID" value="AAA85704.1"/>
    <property type="molecule type" value="Genomic_DNA"/>
</dbReference>
<dbReference type="EMBL" id="BX284603">
    <property type="protein sequence ID" value="CAA84677.1"/>
    <property type="molecule type" value="Genomic_DNA"/>
</dbReference>
<dbReference type="PIR" id="A57283">
    <property type="entry name" value="A57283"/>
</dbReference>
<dbReference type="RefSeq" id="NP_497787.1">
    <property type="nucleotide sequence ID" value="NM_065386.7"/>
</dbReference>
<dbReference type="SMR" id="Q27874"/>
<dbReference type="BioGRID" id="40742">
    <property type="interactions" value="21"/>
</dbReference>
<dbReference type="DIP" id="DIP-27060N"/>
<dbReference type="FunCoup" id="Q27874">
    <property type="interactions" value="1509"/>
</dbReference>
<dbReference type="IntAct" id="Q27874">
    <property type="interactions" value="3"/>
</dbReference>
<dbReference type="STRING" id="6239.ZK1058.2.1"/>
<dbReference type="GlyCosmos" id="Q27874">
    <property type="glycosylation" value="9 sites, No reported glycans"/>
</dbReference>
<dbReference type="iPTMnet" id="Q27874"/>
<dbReference type="PaxDb" id="6239-ZK1058.2"/>
<dbReference type="PeptideAtlas" id="Q27874"/>
<dbReference type="EnsemblMetazoa" id="ZK1058.2.1">
    <property type="protein sequence ID" value="ZK1058.2.1"/>
    <property type="gene ID" value="WBGene00003930"/>
</dbReference>
<dbReference type="GeneID" id="175504"/>
<dbReference type="KEGG" id="cel:CELE_ZK1058.2"/>
<dbReference type="UCSC" id="ZK1058.2">
    <property type="organism name" value="c. elegans"/>
</dbReference>
<dbReference type="AGR" id="WB:WBGene00003930"/>
<dbReference type="CTD" id="175504"/>
<dbReference type="WormBase" id="ZK1058.2">
    <property type="protein sequence ID" value="CE01102"/>
    <property type="gene ID" value="WBGene00003930"/>
    <property type="gene designation" value="pat-3"/>
</dbReference>
<dbReference type="eggNOG" id="KOG1226">
    <property type="taxonomic scope" value="Eukaryota"/>
</dbReference>
<dbReference type="GeneTree" id="ENSGT01130000278313"/>
<dbReference type="HOGENOM" id="CLU_011772_1_0_1"/>
<dbReference type="InParanoid" id="Q27874"/>
<dbReference type="OMA" id="NCVCGAC"/>
<dbReference type="OrthoDB" id="410592at2759"/>
<dbReference type="PhylomeDB" id="Q27874"/>
<dbReference type="Reactome" id="R-CEL-114608">
    <property type="pathway name" value="Platelet degranulation"/>
</dbReference>
<dbReference type="Reactome" id="R-CEL-1236973">
    <property type="pathway name" value="Cross-presentation of particulate exogenous antigens (phagosomes)"/>
</dbReference>
<dbReference type="Reactome" id="R-CEL-2129379">
    <property type="pathway name" value="Molecules associated with elastic fibres"/>
</dbReference>
<dbReference type="Reactome" id="R-CEL-216083">
    <property type="pathway name" value="Integrin cell surface interactions"/>
</dbReference>
<dbReference type="Reactome" id="R-CEL-2173789">
    <property type="pathway name" value="TGF-beta receptor signaling activates SMADs"/>
</dbReference>
<dbReference type="Reactome" id="R-CEL-3000157">
    <property type="pathway name" value="Laminin interactions"/>
</dbReference>
<dbReference type="Reactome" id="R-CEL-3000170">
    <property type="pathway name" value="Syndecan interactions"/>
</dbReference>
<dbReference type="Reactome" id="R-CEL-3000178">
    <property type="pathway name" value="ECM proteoglycans"/>
</dbReference>
<dbReference type="Reactome" id="R-CEL-354192">
    <property type="pathway name" value="Integrin signaling"/>
</dbReference>
<dbReference type="Reactome" id="R-CEL-354194">
    <property type="pathway name" value="GRB2:SOS provides linkage to MAPK signaling for Integrins"/>
</dbReference>
<dbReference type="Reactome" id="R-CEL-4420097">
    <property type="pathway name" value="VEGFA-VEGFR2 Pathway"/>
</dbReference>
<dbReference type="Reactome" id="R-CEL-445144">
    <property type="pathway name" value="Signal transduction by L1"/>
</dbReference>
<dbReference type="Reactome" id="R-CEL-445355">
    <property type="pathway name" value="Smooth Muscle Contraction"/>
</dbReference>
<dbReference type="Reactome" id="R-CEL-5674135">
    <property type="pathway name" value="MAP2K and MAPK activation"/>
</dbReference>
<dbReference type="Reactome" id="R-CEL-6798695">
    <property type="pathway name" value="Neutrophil degranulation"/>
</dbReference>
<dbReference type="Reactome" id="R-CEL-9860927">
    <property type="pathway name" value="Turbulent (oscillatory, disturbed) flow shear stress activates signaling by PIEZO1 and integrins in endothelial cells"/>
</dbReference>
<dbReference type="PRO" id="PR:Q27874"/>
<dbReference type="Proteomes" id="UP000001940">
    <property type="component" value="Chromosome III"/>
</dbReference>
<dbReference type="Bgee" id="WBGene00003930">
    <property type="expression patterns" value="Expressed in embryo and 4 other cell types or tissues"/>
</dbReference>
<dbReference type="GO" id="GO:0005604">
    <property type="term" value="C:basement membrane"/>
    <property type="evidence" value="ECO:0000314"/>
    <property type="project" value="UniProtKB"/>
</dbReference>
<dbReference type="GO" id="GO:0016323">
    <property type="term" value="C:basolateral plasma membrane"/>
    <property type="evidence" value="ECO:0007669"/>
    <property type="project" value="UniProtKB-SubCell"/>
</dbReference>
<dbReference type="GO" id="GO:0009986">
    <property type="term" value="C:cell surface"/>
    <property type="evidence" value="ECO:0000314"/>
    <property type="project" value="WormBase"/>
</dbReference>
<dbReference type="GO" id="GO:0005925">
    <property type="term" value="C:focal adhesion"/>
    <property type="evidence" value="ECO:0000314"/>
    <property type="project" value="UniProtKB"/>
</dbReference>
<dbReference type="GO" id="GO:0008305">
    <property type="term" value="C:integrin complex"/>
    <property type="evidence" value="ECO:0000353"/>
    <property type="project" value="WormBase"/>
</dbReference>
<dbReference type="GO" id="GO:0016328">
    <property type="term" value="C:lateral plasma membrane"/>
    <property type="evidence" value="ECO:0000314"/>
    <property type="project" value="UniProtKB"/>
</dbReference>
<dbReference type="GO" id="GO:0031430">
    <property type="term" value="C:M band"/>
    <property type="evidence" value="ECO:0000314"/>
    <property type="project" value="UniProtKB"/>
</dbReference>
<dbReference type="GO" id="GO:0043005">
    <property type="term" value="C:neuron projection"/>
    <property type="evidence" value="ECO:0000314"/>
    <property type="project" value="WormBase"/>
</dbReference>
<dbReference type="GO" id="GO:0043025">
    <property type="term" value="C:neuronal cell body"/>
    <property type="evidence" value="ECO:0000314"/>
    <property type="project" value="WormBase"/>
</dbReference>
<dbReference type="GO" id="GO:0055120">
    <property type="term" value="C:striated muscle dense body"/>
    <property type="evidence" value="ECO:0000314"/>
    <property type="project" value="UniProtKB"/>
</dbReference>
<dbReference type="GO" id="GO:0030018">
    <property type="term" value="C:Z disc"/>
    <property type="evidence" value="ECO:0000314"/>
    <property type="project" value="UniProtKB"/>
</dbReference>
<dbReference type="GO" id="GO:0005178">
    <property type="term" value="F:integrin binding"/>
    <property type="evidence" value="ECO:0000318"/>
    <property type="project" value="GO_Central"/>
</dbReference>
<dbReference type="GO" id="GO:0033627">
    <property type="term" value="P:cell adhesion mediated by integrin"/>
    <property type="evidence" value="ECO:0000318"/>
    <property type="project" value="GO_Central"/>
</dbReference>
<dbReference type="GO" id="GO:0016477">
    <property type="term" value="P:cell migration"/>
    <property type="evidence" value="ECO:0000318"/>
    <property type="project" value="GO_Central"/>
</dbReference>
<dbReference type="GO" id="GO:0098609">
    <property type="term" value="P:cell-cell adhesion"/>
    <property type="evidence" value="ECO:0000318"/>
    <property type="project" value="GO_Central"/>
</dbReference>
<dbReference type="GO" id="GO:0007160">
    <property type="term" value="P:cell-matrix adhesion"/>
    <property type="evidence" value="ECO:0000318"/>
    <property type="project" value="GO_Central"/>
</dbReference>
<dbReference type="GO" id="GO:0007229">
    <property type="term" value="P:integrin-mediated signaling pathway"/>
    <property type="evidence" value="ECO:0000318"/>
    <property type="project" value="GO_Central"/>
</dbReference>
<dbReference type="GO" id="GO:0007005">
    <property type="term" value="P:mitochondrion organization"/>
    <property type="evidence" value="ECO:0000315"/>
    <property type="project" value="UniProtKB"/>
</dbReference>
<dbReference type="GO" id="GO:0046716">
    <property type="term" value="P:muscle cell cellular homeostasis"/>
    <property type="evidence" value="ECO:0000315"/>
    <property type="project" value="UniProtKB"/>
</dbReference>
<dbReference type="GO" id="GO:0055001">
    <property type="term" value="P:muscle cell development"/>
    <property type="evidence" value="ECO:0000315"/>
    <property type="project" value="WormBase"/>
</dbReference>
<dbReference type="GO" id="GO:0042059">
    <property type="term" value="P:negative regulation of epidermal growth factor receptor signaling pathway"/>
    <property type="evidence" value="ECO:0000315"/>
    <property type="project" value="UniProtKB"/>
</dbReference>
<dbReference type="GO" id="GO:0048680">
    <property type="term" value="P:positive regulation of axon regeneration"/>
    <property type="evidence" value="ECO:0000314"/>
    <property type="project" value="UniProtKB"/>
</dbReference>
<dbReference type="GO" id="GO:0040017">
    <property type="term" value="P:positive regulation of locomotion"/>
    <property type="evidence" value="ECO:0000315"/>
    <property type="project" value="UniProtKB"/>
</dbReference>
<dbReference type="GO" id="GO:1904901">
    <property type="term" value="P:positive regulation of myosin II filament organization"/>
    <property type="evidence" value="ECO:0000315"/>
    <property type="project" value="UniProtKB"/>
</dbReference>
<dbReference type="GO" id="GO:0060279">
    <property type="term" value="P:positive regulation of ovulation"/>
    <property type="evidence" value="ECO:0000315"/>
    <property type="project" value="UniProtKB"/>
</dbReference>
<dbReference type="GO" id="GO:0060298">
    <property type="term" value="P:positive regulation of sarcomere organization"/>
    <property type="evidence" value="ECO:0000315"/>
    <property type="project" value="UniProtKB"/>
</dbReference>
<dbReference type="GO" id="GO:0032956">
    <property type="term" value="P:regulation of actin cytoskeleton organization"/>
    <property type="evidence" value="ECO:0000315"/>
    <property type="project" value="UniProtKB"/>
</dbReference>
<dbReference type="GO" id="GO:1903354">
    <property type="term" value="P:regulation of distal tip cell migration"/>
    <property type="evidence" value="ECO:0000315"/>
    <property type="project" value="UniProtKB"/>
</dbReference>
<dbReference type="GO" id="GO:0040028">
    <property type="term" value="P:regulation of vulval development"/>
    <property type="evidence" value="ECO:0000316"/>
    <property type="project" value="UniProtKB"/>
</dbReference>
<dbReference type="GO" id="GO:0055002">
    <property type="term" value="P:striated muscle cell development"/>
    <property type="evidence" value="ECO:0000315"/>
    <property type="project" value="UniProtKB"/>
</dbReference>
<dbReference type="GO" id="GO:0072327">
    <property type="term" value="P:vulval cell fate specification"/>
    <property type="evidence" value="ECO:0000316"/>
    <property type="project" value="UniProtKB"/>
</dbReference>
<dbReference type="FunFam" id="1.20.5.100:FF:000002">
    <property type="entry name" value="Integrin beta"/>
    <property type="match status" value="1"/>
</dbReference>
<dbReference type="FunFam" id="2.10.25.10:FF:000098">
    <property type="entry name" value="Integrin beta"/>
    <property type="match status" value="1"/>
</dbReference>
<dbReference type="FunFam" id="2.10.25.10:FF:000155">
    <property type="entry name" value="Integrin beta"/>
    <property type="match status" value="1"/>
</dbReference>
<dbReference type="FunFam" id="2.10.25.10:FF:000694">
    <property type="entry name" value="Integrin beta"/>
    <property type="match status" value="1"/>
</dbReference>
<dbReference type="FunFam" id="2.60.40.1510:FF:000024">
    <property type="entry name" value="Integrin beta"/>
    <property type="match status" value="1"/>
</dbReference>
<dbReference type="FunFam" id="3.40.50.410:FF:000002">
    <property type="entry name" value="Integrin beta"/>
    <property type="match status" value="1"/>
</dbReference>
<dbReference type="Gene3D" id="4.10.1240.30">
    <property type="match status" value="1"/>
</dbReference>
<dbReference type="Gene3D" id="1.20.5.100">
    <property type="entry name" value="Cytochrome c1, transmembrane anchor, C-terminal"/>
    <property type="match status" value="1"/>
</dbReference>
<dbReference type="Gene3D" id="2.10.25.10">
    <property type="entry name" value="Laminin"/>
    <property type="match status" value="4"/>
</dbReference>
<dbReference type="Gene3D" id="3.30.1680.10">
    <property type="entry name" value="ligand-binding face of the semaphorins, domain 2"/>
    <property type="match status" value="1"/>
</dbReference>
<dbReference type="Gene3D" id="2.60.40.1510">
    <property type="entry name" value="ntegrin, alpha v. Chain A, domain 3"/>
    <property type="match status" value="1"/>
</dbReference>
<dbReference type="Gene3D" id="3.40.50.410">
    <property type="entry name" value="von Willebrand factor, type A domain"/>
    <property type="match status" value="1"/>
</dbReference>
<dbReference type="InterPro" id="IPR013111">
    <property type="entry name" value="EGF_extracell"/>
</dbReference>
<dbReference type="InterPro" id="IPR033760">
    <property type="entry name" value="Integrin_beta_N"/>
</dbReference>
<dbReference type="InterPro" id="IPR015812">
    <property type="entry name" value="Integrin_bsu"/>
</dbReference>
<dbReference type="InterPro" id="IPR014836">
    <property type="entry name" value="Integrin_bsu_cyt_dom"/>
</dbReference>
<dbReference type="InterPro" id="IPR012896">
    <property type="entry name" value="Integrin_bsu_tail"/>
</dbReference>
<dbReference type="InterPro" id="IPR036349">
    <property type="entry name" value="Integrin_bsu_tail_dom_sf"/>
</dbReference>
<dbReference type="InterPro" id="IPR002369">
    <property type="entry name" value="Integrin_bsu_VWA"/>
</dbReference>
<dbReference type="InterPro" id="IPR032695">
    <property type="entry name" value="Integrin_dom_sf"/>
</dbReference>
<dbReference type="InterPro" id="IPR036465">
    <property type="entry name" value="vWFA_dom_sf"/>
</dbReference>
<dbReference type="PANTHER" id="PTHR10082">
    <property type="entry name" value="INTEGRIN BETA SUBUNIT"/>
    <property type="match status" value="1"/>
</dbReference>
<dbReference type="PANTHER" id="PTHR10082:SF60">
    <property type="entry name" value="INTEGRIN BETA-PS"/>
    <property type="match status" value="1"/>
</dbReference>
<dbReference type="Pfam" id="PF07974">
    <property type="entry name" value="EGF_2"/>
    <property type="match status" value="1"/>
</dbReference>
<dbReference type="Pfam" id="PF23105">
    <property type="entry name" value="EGF_integrin"/>
    <property type="match status" value="2"/>
</dbReference>
<dbReference type="Pfam" id="PF08725">
    <property type="entry name" value="Integrin_b_cyt"/>
    <property type="match status" value="1"/>
</dbReference>
<dbReference type="Pfam" id="PF07965">
    <property type="entry name" value="Integrin_B_tail"/>
    <property type="match status" value="1"/>
</dbReference>
<dbReference type="Pfam" id="PF00362">
    <property type="entry name" value="Integrin_beta"/>
    <property type="match status" value="1"/>
</dbReference>
<dbReference type="Pfam" id="PF17205">
    <property type="entry name" value="PSI_integrin"/>
    <property type="match status" value="1"/>
</dbReference>
<dbReference type="PIRSF" id="PIRSF002512">
    <property type="entry name" value="Integrin_B"/>
    <property type="match status" value="1"/>
</dbReference>
<dbReference type="PRINTS" id="PR01186">
    <property type="entry name" value="INTEGRINB"/>
</dbReference>
<dbReference type="SMART" id="SM00187">
    <property type="entry name" value="INB"/>
    <property type="match status" value="1"/>
</dbReference>
<dbReference type="SMART" id="SM01241">
    <property type="entry name" value="Integrin_b_cyt"/>
    <property type="match status" value="1"/>
</dbReference>
<dbReference type="SMART" id="SM01242">
    <property type="entry name" value="Integrin_B_tail"/>
    <property type="match status" value="1"/>
</dbReference>
<dbReference type="SUPFAM" id="SSF57196">
    <property type="entry name" value="EGF/Laminin"/>
    <property type="match status" value="2"/>
</dbReference>
<dbReference type="SUPFAM" id="SSF69687">
    <property type="entry name" value="Integrin beta tail domain"/>
    <property type="match status" value="1"/>
</dbReference>
<dbReference type="SUPFAM" id="SSF69179">
    <property type="entry name" value="Integrin domains"/>
    <property type="match status" value="1"/>
</dbReference>
<dbReference type="SUPFAM" id="SSF103575">
    <property type="entry name" value="Plexin repeat"/>
    <property type="match status" value="1"/>
</dbReference>
<dbReference type="SUPFAM" id="SSF53300">
    <property type="entry name" value="vWA-like"/>
    <property type="match status" value="1"/>
</dbReference>
<dbReference type="PROSITE" id="PS00022">
    <property type="entry name" value="EGF_1"/>
    <property type="match status" value="2"/>
</dbReference>
<dbReference type="PROSITE" id="PS01186">
    <property type="entry name" value="EGF_2"/>
    <property type="match status" value="1"/>
</dbReference>
<dbReference type="PROSITE" id="PS00243">
    <property type="entry name" value="I_EGF_1"/>
    <property type="match status" value="2"/>
</dbReference>
<dbReference type="PROSITE" id="PS52047">
    <property type="entry name" value="I_EGF_2"/>
    <property type="match status" value="4"/>
</dbReference>
<comment type="function">
    <text evidence="5 7 8 10 12 13 14 17">Integrin alpha ina-1/beta pat-3 is a receptor for laminin. Integrin alpha pat-2/beta pat-3 recognizes the sequence R-G-D in its ligands (Probable). Plays a role in cell migration, morphogenesis and probably in cell-cell interactions (PubMed:17326220, PubMed:19023419, PubMed:23283987). During gonad morphogenesis, involved in distal tip cell (DTC)-mediated guidance of gonad elongation, in maintaining their sharp tapering morphology and in their migration (PubMed:19023419). Component of an integrin containing attachment complex, which is required for muscle development and maintenance (PubMed:22253611). Involved in the assembly of dense bodies and M lines during body wall muscle embryonic development by recruiting one of their components, cpna-1, to integrin-mediated attachment sites (PubMed:23283987). May play a similar role in the assembly of dense bodies in gonadal myoepithelial sheath cells (PubMed:17326220). Probably by acting as a receptor for apoptotic cells, plays a role in the clearance of apoptotic cells during mid-embryogenesis (PubMed:20226672). Required for ovulation (PubMed:17326220). Dephosphorylated, probably within the alpha pat-2/beta pat-3 integrin receptor complex, by the phosphatase dep-1, which leads to down-stream effects including the negative regulation of let-23 signaling and vulval induction (PubMed:28135265). When unphosphosphorylated, recruits the cytoplasmic adapter protein tln-1 to the plasma membrane of secondary vulval precursor cells (PubMed:28135265). This promotes the linking of focal adhesion sites to the F-actin cytoskeleton, and it also acts to restrict the mobility of the let-23 receptor on the plasma membrane of vulval cells which thereby attenuates let-23 signaling (PubMed:28135265). Plays a role in axon regeneration after injury (PubMed:31109965).</text>
</comment>
<comment type="subunit">
    <text evidence="14 16 17 18">Heterodimer of an alpha and a beta subunit (Probable). Interacts with alpha subunit ina-1 (PubMed:9247263). Interacts with alpha subunit pat-2 (Probable). Component of an integrin containing attachment complex, composed of at least pat-2, pat-3, pat-4, pat-6, unc-52, unc-97 and unc-112 (PubMed:22253611). May interact with tns-1 (via C-terminus) (PubMed:31109965).</text>
</comment>
<comment type="subcellular location">
    <subcellularLocation>
        <location evidence="16">Cell membrane</location>
        <topology evidence="17">Single-pass type I membrane protein</topology>
    </subcellularLocation>
    <subcellularLocation>
        <location evidence="13">Lateral cell membrane</location>
        <topology evidence="17">Single-pass type I membrane protein</topology>
    </subcellularLocation>
    <subcellularLocation>
        <location evidence="13 15">Basolateral cell membrane</location>
        <topology evidence="17">Single-pass type I membrane protein</topology>
    </subcellularLocation>
    <subcellularLocation>
        <location evidence="11 12">Cytoplasm</location>
        <location evidence="11 12">Myofibril</location>
        <location evidence="11 12">Sarcomere</location>
        <location evidence="11 12">M line</location>
    </subcellularLocation>
    <subcellularLocation>
        <location evidence="9">Cell junction</location>
        <location evidence="9">Focal adhesion</location>
    </subcellularLocation>
    <text evidence="5 9 11 12">In body wall muscle cells localizes to the base of thick filament M-lines, dense bodies (Z-disks) and in adhesion plaques which form between adjacent cells (PubMed:20385102, PubMed:22479198). In body wall muscles, colocalizes with cpna-1 at integrin adhesion structures (M line and dense bodies) (PubMed:23283987). Decreased localization to dense bodies during the L2/L3 molt (PubMed:20385102). In myoepithelial sheath cells, colocalizes in dense bodies-like structures with actin thin filaments, deb-1/vinculin and unc-52 (PubMed:17326220).</text>
</comment>
<comment type="tissue specificity">
    <text evidence="5 9 12 13">Expressed in body wall muscles (at protein level) (PubMed:20385102, PubMed:23283987). Expressed in gonadal sheath cells and spermatheca (PubMed:17326220). Expressed in vulval cells and along the basal laminae that separate the vulval cells from the uterus (at the protein level) (PubMed:28135265).</text>
</comment>
<comment type="developmental stage">
    <text evidence="9 12 13 16">Expressed in embryos (PubMed:23283987, PubMed:9247263). Highly expressed in mid to late L3 stage larvae (PubMed:28135265). Expressed in adult animals (PubMed:20385102).</text>
</comment>
<comment type="PTM">
    <text evidence="13">Phosphorylated. Dephosphorylated by dep-1.</text>
</comment>
<comment type="disruption phenotype">
    <text evidence="5 7 8 10 13">RNAi-mediated knockdown in distal tip cell (DTC) causes DTC migration and guidance defects during the second phase of gonad elongation resulting in a triangular shaped gonad (PubMed:19023419). Embryos at the comma and 1.5-fold stages have increased number of cell corpses (PubMed:20226672). RNAi-mediated knockdown causes an accumulation in the proximal gonad of endomitotic mature oocytes (PubMed:17326220). RNAi-mediated knockdown results in increased mobility of let-23 receptor on the plasma membrane of vulval cells resulting in enhanced activity of the signaling pathway (PubMed:28135265). RNAi-mediated knockdown in vulval precursor cells in a let-60 gain of function mutant background results in increased vulval induction and an adjacent primary fate (Apf) phenotype whereby secondary vulval precursor cells transform into primary-like vulval cells (PubMed:28135265). RNAi-mediated knockdown results in impaired mobility, mitochondrial fragmentation and disrupted integrin attachment complexes in muscle (PubMed:22253611). This leads to degradation of muscle proteins in the cytosol, myofibrillar defects and disruption of sarcomere organization (PubMed:22253611).</text>
</comment>
<comment type="similarity">
    <text evidence="17">Belongs to the integrin beta chain family.</text>
</comment>